<feature type="chain" id="PRO_0000160555" description="ATP-dependent protease ATPase subunit HslU">
    <location>
        <begin position="1"/>
        <end position="463"/>
    </location>
</feature>
<feature type="binding site" evidence="1">
    <location>
        <position position="21"/>
    </location>
    <ligand>
        <name>ATP</name>
        <dbReference type="ChEBI" id="CHEBI:30616"/>
    </ligand>
</feature>
<feature type="binding site" evidence="1">
    <location>
        <begin position="63"/>
        <end position="68"/>
    </location>
    <ligand>
        <name>ATP</name>
        <dbReference type="ChEBI" id="CHEBI:30616"/>
    </ligand>
</feature>
<feature type="binding site" evidence="1">
    <location>
        <position position="276"/>
    </location>
    <ligand>
        <name>ATP</name>
        <dbReference type="ChEBI" id="CHEBI:30616"/>
    </ligand>
</feature>
<feature type="binding site" evidence="1">
    <location>
        <position position="341"/>
    </location>
    <ligand>
        <name>ATP</name>
        <dbReference type="ChEBI" id="CHEBI:30616"/>
    </ligand>
</feature>
<feature type="binding site" evidence="1">
    <location>
        <position position="413"/>
    </location>
    <ligand>
        <name>ATP</name>
        <dbReference type="ChEBI" id="CHEBI:30616"/>
    </ligand>
</feature>
<proteinExistence type="evidence at protein level"/>
<name>HSLU_THEMA</name>
<sequence>MKSFDEMTPKEIVQELDKYIVGQYEAKKAVAIAVRNRIRRQKLPEEWRKEVLPKNILMIGPTGVGKTEIARRLAQLSGSPFLKVEATRFTEVGYVGKNVDSMIRDLVEISVNMVKQEKIKEVERQAEELVEERILDALVPESKAMPVVTNPFINLITGGQQQQYTPEDRRRFRAKREEMREKLRKGELEDEEIEIELEETVSPFMGIFGPGMEDLGIEITNMFSGMLPKRKKKRKMKVSEARKVLLPLEAEKLIDMDKVVQEALDRAQNRGIIFIDEIDKIAGKESAVGPDVSRQGVQRDLLPIVEGTTIMTKYGPVRTDFILFIAAGAFHVSRPSDLIPELQGRFPIRVELSPLTEEDFVRILKEPENAIIKQYQALLSTEGVELVFTEDGIREMARIAYQLNQRLENIGARRLYTVAEKVLEEISFEAPDIPEKRVVVDAEYVRRRLEKIVQDEDLSAYIL</sequence>
<comment type="function">
    <text evidence="2">ATPase subunit of a proteasome-like degradation complex; this subunit has chaperone activity. The binding of ATP and its subsequent hydrolysis by HslU are essential for unfolding of protein substrates subsequently hydrolyzed by HslV. HslU recognizes the N-terminal part of its protein substrates and unfolds these before they are guided to HslV for hydrolysis.</text>
</comment>
<comment type="biophysicochemical properties">
    <temperatureDependence>
        <text evidence="2">Optimum temperature is 75 degrees Celsius.</text>
    </temperatureDependence>
</comment>
<comment type="subunit">
    <text evidence="1">A double ring-shaped homohexamer of HslV is capped on each side by a ring-shaped HslU homohexamer. The assembly of the HslU/HslV complex is dependent on binding of ATP (By similarity).</text>
</comment>
<comment type="subcellular location">
    <subcellularLocation>
        <location evidence="1">Cytoplasm</location>
    </subcellularLocation>
</comment>
<comment type="similarity">
    <text evidence="3">Belongs to the ClpX chaperone family. HslU subfamily.</text>
</comment>
<protein>
    <recommendedName>
        <fullName>ATP-dependent protease ATPase subunit HslU</fullName>
    </recommendedName>
    <alternativeName>
        <fullName>Unfoldase HslU</fullName>
    </alternativeName>
</protein>
<reference key="1">
    <citation type="journal article" date="1999" name="Nature">
        <title>Evidence for lateral gene transfer between Archaea and Bacteria from genome sequence of Thermotoga maritima.</title>
        <authorList>
            <person name="Nelson K.E."/>
            <person name="Clayton R.A."/>
            <person name="Gill S.R."/>
            <person name="Gwinn M.L."/>
            <person name="Dodson R.J."/>
            <person name="Haft D.H."/>
            <person name="Hickey E.K."/>
            <person name="Peterson J.D."/>
            <person name="Nelson W.C."/>
            <person name="Ketchum K.A."/>
            <person name="McDonald L.A."/>
            <person name="Utterback T.R."/>
            <person name="Malek J.A."/>
            <person name="Linher K.D."/>
            <person name="Garrett M.M."/>
            <person name="Stewart A.M."/>
            <person name="Cotton M.D."/>
            <person name="Pratt M.S."/>
            <person name="Phillips C.A."/>
            <person name="Richardson D.L."/>
            <person name="Heidelberg J.F."/>
            <person name="Sutton G.G."/>
            <person name="Fleischmann R.D."/>
            <person name="Eisen J.A."/>
            <person name="White O."/>
            <person name="Salzberg S.L."/>
            <person name="Smith H.O."/>
            <person name="Venter J.C."/>
            <person name="Fraser C.M."/>
        </authorList>
    </citation>
    <scope>NUCLEOTIDE SEQUENCE [LARGE SCALE GENOMIC DNA]</scope>
    <source>
        <strain>ATCC 43589 / DSM 3109 / JCM 10099 / NBRC 100826 / MSB8</strain>
    </source>
</reference>
<reference key="2">
    <citation type="journal article" date="2003" name="Biophys. Chem.">
        <title>Isolation and characterization of the prokaryotic proteasome homolog HslVU (ClpQY) from Thermotoga maritima and the crystal structure of HslV.</title>
        <authorList>
            <person name="Song H.K."/>
            <person name="Bochtler M."/>
            <person name="Azim M.K."/>
            <person name="Hartmann C."/>
            <person name="Huber R."/>
            <person name="Ramachandran R."/>
        </authorList>
    </citation>
    <scope>FUNCTION</scope>
    <scope>CATALYTIC ACTIVITY</scope>
    <scope>BIOPHYSICOCHEMICAL PROPERTIES</scope>
</reference>
<organism>
    <name type="scientific">Thermotoga maritima (strain ATCC 43589 / DSM 3109 / JCM 10099 / NBRC 100826 / MSB8)</name>
    <dbReference type="NCBI Taxonomy" id="243274"/>
    <lineage>
        <taxon>Bacteria</taxon>
        <taxon>Thermotogati</taxon>
        <taxon>Thermotogota</taxon>
        <taxon>Thermotogae</taxon>
        <taxon>Thermotogales</taxon>
        <taxon>Thermotogaceae</taxon>
        <taxon>Thermotoga</taxon>
    </lineage>
</organism>
<accession>Q9WYZ2</accession>
<evidence type="ECO:0000250" key="1"/>
<evidence type="ECO:0000269" key="2">
    <source>
    </source>
</evidence>
<evidence type="ECO:0000305" key="3"/>
<keyword id="KW-0067">ATP-binding</keyword>
<keyword id="KW-0143">Chaperone</keyword>
<keyword id="KW-0963">Cytoplasm</keyword>
<keyword id="KW-0547">Nucleotide-binding</keyword>
<keyword id="KW-1185">Reference proteome</keyword>
<dbReference type="EMBL" id="AE000512">
    <property type="protein sequence ID" value="AAD35607.1"/>
    <property type="molecule type" value="Genomic_DNA"/>
</dbReference>
<dbReference type="PIR" id="H72365">
    <property type="entry name" value="H72365"/>
</dbReference>
<dbReference type="RefSeq" id="NP_228332.1">
    <property type="nucleotide sequence ID" value="NC_000853.1"/>
</dbReference>
<dbReference type="RefSeq" id="WP_004081401.1">
    <property type="nucleotide sequence ID" value="NZ_CP011107.1"/>
</dbReference>
<dbReference type="SMR" id="Q9WYZ2"/>
<dbReference type="FunCoup" id="Q9WYZ2">
    <property type="interactions" value="53"/>
</dbReference>
<dbReference type="STRING" id="243274.TM_0522"/>
<dbReference type="PaxDb" id="243274-THEMA_02065"/>
<dbReference type="EnsemblBacteria" id="AAD35607">
    <property type="protein sequence ID" value="AAD35607"/>
    <property type="gene ID" value="TM_0522"/>
</dbReference>
<dbReference type="KEGG" id="tma:TM0522"/>
<dbReference type="KEGG" id="tmi:THEMA_02065"/>
<dbReference type="KEGG" id="tmm:Tmari_0518"/>
<dbReference type="KEGG" id="tmw:THMA_0534"/>
<dbReference type="eggNOG" id="COG1220">
    <property type="taxonomic scope" value="Bacteria"/>
</dbReference>
<dbReference type="InParanoid" id="Q9WYZ2"/>
<dbReference type="OrthoDB" id="9804062at2"/>
<dbReference type="Proteomes" id="UP000008183">
    <property type="component" value="Chromosome"/>
</dbReference>
<dbReference type="GO" id="GO:0009376">
    <property type="term" value="C:HslUV protease complex"/>
    <property type="evidence" value="ECO:0000318"/>
    <property type="project" value="GO_Central"/>
</dbReference>
<dbReference type="GO" id="GO:0005524">
    <property type="term" value="F:ATP binding"/>
    <property type="evidence" value="ECO:0000318"/>
    <property type="project" value="GO_Central"/>
</dbReference>
<dbReference type="GO" id="GO:0016887">
    <property type="term" value="F:ATP hydrolysis activity"/>
    <property type="evidence" value="ECO:0000318"/>
    <property type="project" value="GO_Central"/>
</dbReference>
<dbReference type="GO" id="GO:0008233">
    <property type="term" value="F:peptidase activity"/>
    <property type="evidence" value="ECO:0007669"/>
    <property type="project" value="InterPro"/>
</dbReference>
<dbReference type="GO" id="GO:0036402">
    <property type="term" value="F:proteasome-activating activity"/>
    <property type="evidence" value="ECO:0007669"/>
    <property type="project" value="UniProtKB-UniRule"/>
</dbReference>
<dbReference type="GO" id="GO:0043335">
    <property type="term" value="P:protein unfolding"/>
    <property type="evidence" value="ECO:0007669"/>
    <property type="project" value="UniProtKB-UniRule"/>
</dbReference>
<dbReference type="GO" id="GO:0051603">
    <property type="term" value="P:proteolysis involved in protein catabolic process"/>
    <property type="evidence" value="ECO:0000318"/>
    <property type="project" value="GO_Central"/>
</dbReference>
<dbReference type="CDD" id="cd19498">
    <property type="entry name" value="RecA-like_HslU"/>
    <property type="match status" value="1"/>
</dbReference>
<dbReference type="FunFam" id="3.40.50.300:FF:000220">
    <property type="entry name" value="ATP-dependent protease ATPase subunit HslU"/>
    <property type="match status" value="1"/>
</dbReference>
<dbReference type="Gene3D" id="1.10.8.60">
    <property type="match status" value="1"/>
</dbReference>
<dbReference type="Gene3D" id="3.40.50.300">
    <property type="entry name" value="P-loop containing nucleotide triphosphate hydrolases"/>
    <property type="match status" value="2"/>
</dbReference>
<dbReference type="HAMAP" id="MF_00249">
    <property type="entry name" value="HslU"/>
    <property type="match status" value="1"/>
</dbReference>
<dbReference type="InterPro" id="IPR003593">
    <property type="entry name" value="AAA+_ATPase"/>
</dbReference>
<dbReference type="InterPro" id="IPR050052">
    <property type="entry name" value="ATP-dep_Clp_protease_ClpX"/>
</dbReference>
<dbReference type="InterPro" id="IPR003959">
    <property type="entry name" value="ATPase_AAA_core"/>
</dbReference>
<dbReference type="InterPro" id="IPR019489">
    <property type="entry name" value="Clp_ATPase_C"/>
</dbReference>
<dbReference type="InterPro" id="IPR004491">
    <property type="entry name" value="HslU"/>
</dbReference>
<dbReference type="InterPro" id="IPR027417">
    <property type="entry name" value="P-loop_NTPase"/>
</dbReference>
<dbReference type="NCBIfam" id="TIGR00390">
    <property type="entry name" value="hslU"/>
    <property type="match status" value="1"/>
</dbReference>
<dbReference type="NCBIfam" id="NF003544">
    <property type="entry name" value="PRK05201.1"/>
    <property type="match status" value="1"/>
</dbReference>
<dbReference type="PANTHER" id="PTHR48102">
    <property type="entry name" value="ATP-DEPENDENT CLP PROTEASE ATP-BINDING SUBUNIT CLPX-LIKE, MITOCHONDRIAL-RELATED"/>
    <property type="match status" value="1"/>
</dbReference>
<dbReference type="PANTHER" id="PTHR48102:SF3">
    <property type="entry name" value="ATP-DEPENDENT PROTEASE ATPASE SUBUNIT HSLU"/>
    <property type="match status" value="1"/>
</dbReference>
<dbReference type="Pfam" id="PF00004">
    <property type="entry name" value="AAA"/>
    <property type="match status" value="1"/>
</dbReference>
<dbReference type="Pfam" id="PF07724">
    <property type="entry name" value="AAA_2"/>
    <property type="match status" value="1"/>
</dbReference>
<dbReference type="SMART" id="SM00382">
    <property type="entry name" value="AAA"/>
    <property type="match status" value="1"/>
</dbReference>
<dbReference type="SMART" id="SM01086">
    <property type="entry name" value="ClpB_D2-small"/>
    <property type="match status" value="1"/>
</dbReference>
<dbReference type="SUPFAM" id="SSF52540">
    <property type="entry name" value="P-loop containing nucleoside triphosphate hydrolases"/>
    <property type="match status" value="1"/>
</dbReference>
<gene>
    <name type="primary">hslU</name>
    <name type="ordered locus">TM_0522</name>
</gene>